<proteinExistence type="evidence at transcript level"/>
<comment type="function">
    <text evidence="1">Non-catalytic subunit of the queuine tRNA-ribosyltransferase (TGT) that catalyzes the base-exchange of a guanine (G) residue with queuine (Q) at position 34 (anticodon wobble position) in tRNAs with GU(N) anticodons (tRNA-Asp, -Asn, -His and -Tyr), resulting in the hypermodified nucleoside queuosine (7-(((4,5-cis-dihydroxy-2-cyclopenten-1-yl)amino)methyl)-7-deazaguanosine).</text>
</comment>
<comment type="cofactor">
    <cofactor evidence="1">
        <name>Zn(2+)</name>
        <dbReference type="ChEBI" id="CHEBI:29105"/>
    </cofactor>
    <text evidence="1">Binds 1 zinc ion per subunit.</text>
</comment>
<comment type="subunit">
    <text evidence="1">Heterodimer of a catalytic subunit QTRT1 and an accessory subunit QTRT2.</text>
</comment>
<comment type="subcellular location">
    <subcellularLocation>
        <location evidence="1">Cytoplasm</location>
    </subcellularLocation>
    <subcellularLocation>
        <location evidence="1">Mitochondrion outer membrane</location>
        <topology evidence="1">Peripheral membrane protein</topology>
        <orientation evidence="1">Cytoplasmic side</orientation>
    </subcellularLocation>
    <text evidence="1">May associate with the mitochondrion outer membrane.</text>
</comment>
<comment type="similarity">
    <text evidence="1">Belongs to the queuine tRNA-ribosyltransferase family. QTRT2 subfamily.</text>
</comment>
<dbReference type="EMBL" id="AJ719488">
    <property type="protein sequence ID" value="CAG31147.1"/>
    <property type="molecule type" value="mRNA"/>
</dbReference>
<dbReference type="RefSeq" id="NP_001025952.1">
    <property type="nucleotide sequence ID" value="NM_001030781.1"/>
</dbReference>
<dbReference type="SMR" id="Q5ZM96"/>
<dbReference type="FunCoup" id="Q5ZM96">
    <property type="interactions" value="1849"/>
</dbReference>
<dbReference type="STRING" id="9031.ENSGALP00000048925"/>
<dbReference type="PaxDb" id="9031-ENSGALP00000024354"/>
<dbReference type="GeneID" id="418351"/>
<dbReference type="KEGG" id="gga:418351"/>
<dbReference type="CTD" id="79691"/>
<dbReference type="VEuPathDB" id="HostDB:geneid_418351"/>
<dbReference type="eggNOG" id="KOG3909">
    <property type="taxonomic scope" value="Eukaryota"/>
</dbReference>
<dbReference type="InParanoid" id="Q5ZM96"/>
<dbReference type="OrthoDB" id="27601at2759"/>
<dbReference type="PhylomeDB" id="Q5ZM96"/>
<dbReference type="PRO" id="PR:Q5ZM96"/>
<dbReference type="Proteomes" id="UP000000539">
    <property type="component" value="Unassembled WGS sequence"/>
</dbReference>
<dbReference type="GO" id="GO:0005737">
    <property type="term" value="C:cytoplasm"/>
    <property type="evidence" value="ECO:0000250"/>
    <property type="project" value="UniProtKB"/>
</dbReference>
<dbReference type="GO" id="GO:0005741">
    <property type="term" value="C:mitochondrial outer membrane"/>
    <property type="evidence" value="ECO:0007669"/>
    <property type="project" value="UniProtKB-SubCell"/>
</dbReference>
<dbReference type="GO" id="GO:0005739">
    <property type="term" value="C:mitochondrion"/>
    <property type="evidence" value="ECO:0000250"/>
    <property type="project" value="UniProtKB"/>
</dbReference>
<dbReference type="GO" id="GO:0046872">
    <property type="term" value="F:metal ion binding"/>
    <property type="evidence" value="ECO:0007669"/>
    <property type="project" value="UniProtKB-KW"/>
</dbReference>
<dbReference type="GO" id="GO:0046982">
    <property type="term" value="F:protein heterodimerization activity"/>
    <property type="evidence" value="ECO:0000250"/>
    <property type="project" value="UniProtKB"/>
</dbReference>
<dbReference type="GO" id="GO:0042803">
    <property type="term" value="F:protein homodimerization activity"/>
    <property type="evidence" value="ECO:0000250"/>
    <property type="project" value="UniProtKB"/>
</dbReference>
<dbReference type="GO" id="GO:0000049">
    <property type="term" value="F:tRNA binding"/>
    <property type="evidence" value="ECO:0000250"/>
    <property type="project" value="UniProtKB"/>
</dbReference>
<dbReference type="GO" id="GO:0008479">
    <property type="term" value="F:tRNA-guanosine(34) queuine transglycosylase activity"/>
    <property type="evidence" value="ECO:0007669"/>
    <property type="project" value="UniProtKB-UniRule"/>
</dbReference>
<dbReference type="GO" id="GO:0101030">
    <property type="term" value="P:tRNA-guanine transglycosylation"/>
    <property type="evidence" value="ECO:0000318"/>
    <property type="project" value="GO_Central"/>
</dbReference>
<dbReference type="Gene3D" id="3.20.20.105">
    <property type="entry name" value="Queuine tRNA-ribosyltransferase-like"/>
    <property type="match status" value="1"/>
</dbReference>
<dbReference type="HAMAP" id="MF_03043">
    <property type="entry name" value="QTRT2"/>
    <property type="match status" value="1"/>
</dbReference>
<dbReference type="InterPro" id="IPR028592">
    <property type="entry name" value="QTRTD1"/>
</dbReference>
<dbReference type="InterPro" id="IPR050852">
    <property type="entry name" value="Queuine_tRNA-ribosyltrfase"/>
</dbReference>
<dbReference type="InterPro" id="IPR036511">
    <property type="entry name" value="TGT-like_sf"/>
</dbReference>
<dbReference type="InterPro" id="IPR002616">
    <property type="entry name" value="tRNA_ribo_trans-like"/>
</dbReference>
<dbReference type="NCBIfam" id="TIGR00449">
    <property type="entry name" value="tgt_general"/>
    <property type="match status" value="1"/>
</dbReference>
<dbReference type="PANTHER" id="PTHR46064">
    <property type="entry name" value="QUEUINE TRNA-RIBOSYLTRANSFERASE ACCESSORY SUBUNIT 2"/>
    <property type="match status" value="1"/>
</dbReference>
<dbReference type="PANTHER" id="PTHR46064:SF1">
    <property type="entry name" value="QUEUINE TRNA-RIBOSYLTRANSFERASE ACCESSORY SUBUNIT 2"/>
    <property type="match status" value="1"/>
</dbReference>
<dbReference type="Pfam" id="PF01702">
    <property type="entry name" value="TGT"/>
    <property type="match status" value="1"/>
</dbReference>
<dbReference type="SUPFAM" id="SSF51713">
    <property type="entry name" value="tRNA-guanine transglycosylase"/>
    <property type="match status" value="1"/>
</dbReference>
<evidence type="ECO:0000255" key="1">
    <source>
        <dbReference type="HAMAP-Rule" id="MF_03043"/>
    </source>
</evidence>
<evidence type="ECO:0000256" key="2">
    <source>
        <dbReference type="SAM" id="MobiDB-lite"/>
    </source>
</evidence>
<protein>
    <recommendedName>
        <fullName evidence="1">Queuine tRNA-ribosyltransferase accessory subunit 2</fullName>
    </recommendedName>
    <alternativeName>
        <fullName evidence="1">Queuine tRNA-ribosyltransferase domain-containing protein 1</fullName>
    </alternativeName>
</protein>
<gene>
    <name evidence="1" type="primary">QTRT2</name>
    <name evidence="1" type="synonym">QTRTD1</name>
    <name type="ORF">RCJMB04_2m13</name>
</gene>
<feature type="chain" id="PRO_0000383925" description="Queuine tRNA-ribosyltransferase accessory subunit 2">
    <location>
        <begin position="1"/>
        <end position="425"/>
    </location>
</feature>
<feature type="region of interest" description="Disordered" evidence="2">
    <location>
        <begin position="302"/>
        <end position="323"/>
    </location>
</feature>
<feature type="binding site" evidence="1">
    <location>
        <position position="351"/>
    </location>
    <ligand>
        <name>Zn(2+)</name>
        <dbReference type="ChEBI" id="CHEBI:29105"/>
    </ligand>
</feature>
<feature type="binding site" evidence="1">
    <location>
        <position position="353"/>
    </location>
    <ligand>
        <name>Zn(2+)</name>
        <dbReference type="ChEBI" id="CHEBI:29105"/>
    </ligand>
</feature>
<feature type="binding site" evidence="1">
    <location>
        <position position="356"/>
    </location>
    <ligand>
        <name>Zn(2+)</name>
        <dbReference type="ChEBI" id="CHEBI:29105"/>
    </ligand>
</feature>
<feature type="binding site" evidence="1">
    <location>
        <position position="382"/>
    </location>
    <ligand>
        <name>Zn(2+)</name>
        <dbReference type="ChEBI" id="CHEBI:29105"/>
    </ligand>
</feature>
<organism>
    <name type="scientific">Gallus gallus</name>
    <name type="common">Chicken</name>
    <dbReference type="NCBI Taxonomy" id="9031"/>
    <lineage>
        <taxon>Eukaryota</taxon>
        <taxon>Metazoa</taxon>
        <taxon>Chordata</taxon>
        <taxon>Craniata</taxon>
        <taxon>Vertebrata</taxon>
        <taxon>Euteleostomi</taxon>
        <taxon>Archelosauria</taxon>
        <taxon>Archosauria</taxon>
        <taxon>Dinosauria</taxon>
        <taxon>Saurischia</taxon>
        <taxon>Theropoda</taxon>
        <taxon>Coelurosauria</taxon>
        <taxon>Aves</taxon>
        <taxon>Neognathae</taxon>
        <taxon>Galloanserae</taxon>
        <taxon>Galliformes</taxon>
        <taxon>Phasianidae</taxon>
        <taxon>Phasianinae</taxon>
        <taxon>Gallus</taxon>
    </lineage>
</organism>
<reference key="1">
    <citation type="journal article" date="2005" name="Genome Biol.">
        <title>Full-length cDNAs from chicken bursal lymphocytes to facilitate gene function analysis.</title>
        <authorList>
            <person name="Caldwell R.B."/>
            <person name="Kierzek A.M."/>
            <person name="Arakawa H."/>
            <person name="Bezzubov Y."/>
            <person name="Zaim J."/>
            <person name="Fiedler P."/>
            <person name="Kutter S."/>
            <person name="Blagodatski A."/>
            <person name="Kostovska D."/>
            <person name="Koter M."/>
            <person name="Plachy J."/>
            <person name="Carninci P."/>
            <person name="Hayashizaki Y."/>
            <person name="Buerstedde J.-M."/>
        </authorList>
    </citation>
    <scope>NUCLEOTIDE SEQUENCE [LARGE SCALE MRNA]</scope>
    <source>
        <strain>CB</strain>
        <tissue>Bursa of Fabricius</tissue>
    </source>
</reference>
<sequence>MRVKLCGAAGGRLGTLAGLGRSGAAALALPGCLLYTRTGTAPHLTLDTLREVSGVPPVAQLTLPAMAELHDVLAEYKEGAAKFIGMPDTVLYCSLQDPVAPCPSGYNTNKTVSLWSSSGRMEMTASKFMDIQRAIQPDWFQCIADGDTISGEVTRKRAKKSVDRSLSFLDACLQLLEKTPELQGSVMFGTIEGGDVLEERLRSARETAKRPVGGFLLDGFQGRAMAKETKMNLISSVTAELPEDKPRIIHGVGKPDEVLECIERGVDIFESFFPFQVTERGCALVFGYDYLSDPKAEAALKQNGAQDLEKNSPEEDQEEEVVKADPEMTPFEIFLKEKRYHDDFRPLLEGCTCYCCQRHTRAYLHHLLVSSELLAGVLLMMHNFQHYFSFFSAIRDALRDDKLDQLKKLIFRQALQGPENAKIDQ</sequence>
<accession>Q5ZM96</accession>
<keyword id="KW-0963">Cytoplasm</keyword>
<keyword id="KW-0472">Membrane</keyword>
<keyword id="KW-0479">Metal-binding</keyword>
<keyword id="KW-0496">Mitochondrion</keyword>
<keyword id="KW-1000">Mitochondrion outer membrane</keyword>
<keyword id="KW-1185">Reference proteome</keyword>
<keyword id="KW-0819">tRNA processing</keyword>
<keyword id="KW-0862">Zinc</keyword>
<name>QTRT2_CHICK</name>